<comment type="function">
    <text evidence="1">Snake venom phospholipase A2 (PLA2) that inhibits neuromuscular transmission by blocking acetylcholine release from the nerve termini. PLA2 catalyzes the calcium-dependent hydrolysis of the 2-acyl groups in 3-sn-phosphoglycerides (By similarity).</text>
</comment>
<comment type="catalytic activity">
    <reaction evidence="4">
        <text>a 1,2-diacyl-sn-glycero-3-phosphocholine + H2O = a 1-acyl-sn-glycero-3-phosphocholine + a fatty acid + H(+)</text>
        <dbReference type="Rhea" id="RHEA:15801"/>
        <dbReference type="ChEBI" id="CHEBI:15377"/>
        <dbReference type="ChEBI" id="CHEBI:15378"/>
        <dbReference type="ChEBI" id="CHEBI:28868"/>
        <dbReference type="ChEBI" id="CHEBI:57643"/>
        <dbReference type="ChEBI" id="CHEBI:58168"/>
        <dbReference type="EC" id="3.1.1.4"/>
    </reaction>
</comment>
<comment type="cofactor">
    <cofactor evidence="6">
        <name>Ca(2+)</name>
        <dbReference type="ChEBI" id="CHEBI:29108"/>
    </cofactor>
    <text evidence="6">Binds 1 Ca(2+) ion.</text>
</comment>
<comment type="subunit">
    <text evidence="2">Heterodimer; disulfide-linked. The A chains have phospholipase A2 activity and the B chains show homology with the basic protease inhibitors.</text>
</comment>
<comment type="subcellular location">
    <subcellularLocation>
        <location evidence="5 6">Secreted</location>
    </subcellularLocation>
</comment>
<comment type="tissue specificity">
    <text evidence="8 9">Expressed by the venom gland.</text>
</comment>
<comment type="PTM">
    <text>This enzyme lacks one of the seven disulfide bonds found in similar PLA2 proteins.</text>
</comment>
<comment type="similarity">
    <text evidence="7">Belongs to the phospholipase A2 family. Group I subfamily. G49 sub-subfamily.</text>
</comment>
<protein>
    <recommendedName>
        <fullName>Basic phospholipase A2 beta-bungarotoxin A-AL1 chain</fullName>
        <shortName>Beta-BuTX A-AL1 chain</shortName>
        <shortName>svPLA2</shortName>
        <ecNumber>3.1.1.4</ecNumber>
    </recommendedName>
    <alternativeName>
        <fullName>Phosphatidylcholine 2-acylhydrolase</fullName>
    </alternativeName>
    <alternativeName>
        <fullName>SP III-A</fullName>
    </alternativeName>
</protein>
<evidence type="ECO:0000250" key="1"/>
<evidence type="ECO:0000250" key="2">
    <source>
        <dbReference type="UniProtKB" id="P00617"/>
    </source>
</evidence>
<evidence type="ECO:0000255" key="3"/>
<evidence type="ECO:0000255" key="4">
    <source>
        <dbReference type="PROSITE-ProRule" id="PRU10036"/>
    </source>
</evidence>
<evidence type="ECO:0000269" key="5">
    <source>
    </source>
</evidence>
<evidence type="ECO:0000269" key="6">
    <source>
    </source>
</evidence>
<evidence type="ECO:0000305" key="7"/>
<evidence type="ECO:0000305" key="8">
    <source>
    </source>
</evidence>
<evidence type="ECO:0000305" key="9">
    <source>
    </source>
</evidence>
<evidence type="ECO:0000312" key="10">
    <source>
        <dbReference type="EMBL" id="CAD24467.1"/>
    </source>
</evidence>
<proteinExistence type="evidence at protein level"/>
<keyword id="KW-0106">Calcium</keyword>
<keyword id="KW-0903">Direct protein sequencing</keyword>
<keyword id="KW-1015">Disulfide bond</keyword>
<keyword id="KW-0378">Hydrolase</keyword>
<keyword id="KW-0442">Lipid degradation</keyword>
<keyword id="KW-0443">Lipid metabolism</keyword>
<keyword id="KW-0479">Metal-binding</keyword>
<keyword id="KW-0528">Neurotoxin</keyword>
<keyword id="KW-0638">Presynaptic neurotoxin</keyword>
<keyword id="KW-0964">Secreted</keyword>
<keyword id="KW-0732">Signal</keyword>
<keyword id="KW-0800">Toxin</keyword>
<dbReference type="EC" id="3.1.1.4"/>
<dbReference type="EMBL" id="AJ431712">
    <property type="protein sequence ID" value="CAD24467.1"/>
    <property type="molecule type" value="mRNA"/>
</dbReference>
<dbReference type="EMBL" id="AJ251227">
    <property type="protein sequence ID" value="CAB62506.1"/>
    <property type="molecule type" value="Genomic_DNA"/>
</dbReference>
<dbReference type="SMR" id="Q9PTA1"/>
<dbReference type="GO" id="GO:0005576">
    <property type="term" value="C:extracellular region"/>
    <property type="evidence" value="ECO:0007669"/>
    <property type="project" value="UniProtKB-SubCell"/>
</dbReference>
<dbReference type="GO" id="GO:0005509">
    <property type="term" value="F:calcium ion binding"/>
    <property type="evidence" value="ECO:0007669"/>
    <property type="project" value="InterPro"/>
</dbReference>
<dbReference type="GO" id="GO:0047498">
    <property type="term" value="F:calcium-dependent phospholipase A2 activity"/>
    <property type="evidence" value="ECO:0007669"/>
    <property type="project" value="TreeGrafter"/>
</dbReference>
<dbReference type="GO" id="GO:0005543">
    <property type="term" value="F:phospholipid binding"/>
    <property type="evidence" value="ECO:0007669"/>
    <property type="project" value="TreeGrafter"/>
</dbReference>
<dbReference type="GO" id="GO:0090729">
    <property type="term" value="F:toxin activity"/>
    <property type="evidence" value="ECO:0007669"/>
    <property type="project" value="UniProtKB-KW"/>
</dbReference>
<dbReference type="GO" id="GO:0050482">
    <property type="term" value="P:arachidonate secretion"/>
    <property type="evidence" value="ECO:0007669"/>
    <property type="project" value="InterPro"/>
</dbReference>
<dbReference type="GO" id="GO:0016042">
    <property type="term" value="P:lipid catabolic process"/>
    <property type="evidence" value="ECO:0007669"/>
    <property type="project" value="UniProtKB-KW"/>
</dbReference>
<dbReference type="GO" id="GO:0006644">
    <property type="term" value="P:phospholipid metabolic process"/>
    <property type="evidence" value="ECO:0007669"/>
    <property type="project" value="InterPro"/>
</dbReference>
<dbReference type="CDD" id="cd00125">
    <property type="entry name" value="PLA2c"/>
    <property type="match status" value="1"/>
</dbReference>
<dbReference type="FunFam" id="1.20.90.10:FF:000007">
    <property type="entry name" value="Acidic phospholipase A2"/>
    <property type="match status" value="1"/>
</dbReference>
<dbReference type="Gene3D" id="1.20.90.10">
    <property type="entry name" value="Phospholipase A2 domain"/>
    <property type="match status" value="1"/>
</dbReference>
<dbReference type="InterPro" id="IPR001211">
    <property type="entry name" value="PLipase_A2"/>
</dbReference>
<dbReference type="InterPro" id="IPR033112">
    <property type="entry name" value="PLipase_A2_Asp_AS"/>
</dbReference>
<dbReference type="InterPro" id="IPR016090">
    <property type="entry name" value="PLipase_A2_dom"/>
</dbReference>
<dbReference type="InterPro" id="IPR036444">
    <property type="entry name" value="PLipase_A2_dom_sf"/>
</dbReference>
<dbReference type="PANTHER" id="PTHR11716:SF100">
    <property type="entry name" value="PHOSPHOLIPASE A2"/>
    <property type="match status" value="1"/>
</dbReference>
<dbReference type="PANTHER" id="PTHR11716">
    <property type="entry name" value="PHOSPHOLIPASE A2 FAMILY MEMBER"/>
    <property type="match status" value="1"/>
</dbReference>
<dbReference type="Pfam" id="PF00068">
    <property type="entry name" value="Phospholip_A2_1"/>
    <property type="match status" value="1"/>
</dbReference>
<dbReference type="PRINTS" id="PR00389">
    <property type="entry name" value="PHPHLIPASEA2"/>
</dbReference>
<dbReference type="SMART" id="SM00085">
    <property type="entry name" value="PA2c"/>
    <property type="match status" value="1"/>
</dbReference>
<dbReference type="SUPFAM" id="SSF48619">
    <property type="entry name" value="Phospholipase A2, PLA2"/>
    <property type="match status" value="1"/>
</dbReference>
<dbReference type="PROSITE" id="PS00119">
    <property type="entry name" value="PA2_ASP"/>
    <property type="match status" value="1"/>
</dbReference>
<name>PA2BA_BUNMU</name>
<reference evidence="10" key="1">
    <citation type="submission" date="2002-02" db="EMBL/GenBank/DDBJ databases">
        <title>Genomic organization of the genes encoding the A chains of beta-bungarotoxins.</title>
        <authorList>
            <person name="Chang L.S."/>
            <person name="Chu Y.P."/>
        </authorList>
    </citation>
    <scope>NUCLEOTIDE SEQUENCE [MRNA]</scope>
    <source>
        <tissue>Venom gland</tissue>
    </source>
</reference>
<reference key="2">
    <citation type="journal article" date="2000" name="Eur. J. Biochem.">
        <title>Genetic organization of A chain and B chain of beta-bungarotoxin from Taiwan banded krait (Bungarus multicinctus). A chain genes and B chain genes do not share a common origin.</title>
        <authorList>
            <person name="Wu P.-F."/>
            <person name="Chang L.-S."/>
        </authorList>
    </citation>
    <scope>NUCLEOTIDE SEQUENCE [GENOMIC DNA] OF 8-145</scope>
    <source>
        <tissue>Liver</tissue>
    </source>
</reference>
<reference key="3">
    <citation type="journal article" date="1994" name="Biochem. J.">
        <title>The non-phospholipase A2 subunit of beta-bungarotoxin plays an important role in the phospholipase A2-independent neurotoxic effect: characterization of three isotoxins with a common phospholipase A2 subunit.</title>
        <authorList>
            <person name="Chu C.C."/>
            <person name="Chu S.T."/>
            <person name="Chen S.W."/>
            <person name="Chen Y.H."/>
        </authorList>
    </citation>
    <scope>PROTEIN SEQUENCE OF 26-59</scope>
    <scope>SUBCELLULAR LOCATION</scope>
    <scope>COFACTOR</scope>
    <source>
        <tissue>Venom</tissue>
    </source>
</reference>
<reference key="4">
    <citation type="journal article" date="1995" name="J. Chromatogr. A">
        <title>Resolution of isotoxins in the beta-bungarotoxin family.</title>
        <authorList>
            <person name="Chu C.C."/>
            <person name="Li S.H."/>
            <person name="Chen Y.H."/>
        </authorList>
    </citation>
    <scope>PROTEIN SEQUENCE OF 26-57; 90-96; 101-136 AND 143-145</scope>
    <scope>SUBCELLULAR LOCATION</scope>
    <source>
        <tissue>Venom</tissue>
    </source>
</reference>
<reference key="5">
    <citation type="journal article" date="2001" name="Toxicon">
        <title>What does beta-bungarotoxin do at the neuromuscular junction?</title>
        <authorList>
            <person name="Rowan E.G."/>
        </authorList>
    </citation>
    <scope>REVIEW</scope>
</reference>
<sequence length="145" mass="16108">MLIFLWCGAVCVSLLGAANIPPHPLNLINFMEMIRYTIPCEKTWGEYADYGCYCGAGGSGRPIDALDRCCYVHDNCYGDAEKKHKCNPKTQSYSYKLTKRTIICYGAAGTCGRIVCDCDRTAALCFGNSEYIEGHKNIDTARFCQ</sequence>
<feature type="signal peptide" evidence="3">
    <location>
        <begin position="1"/>
        <end position="17"/>
    </location>
</feature>
<feature type="propeptide" id="PRO_0000462266" evidence="2">
    <location>
        <begin position="18"/>
        <end position="25"/>
    </location>
</feature>
<feature type="chain" id="PRO_0000022846" description="Basic phospholipase A2 beta-bungarotoxin A-AL1 chain" evidence="8 9">
    <location>
        <begin position="26"/>
        <end position="145"/>
    </location>
</feature>
<feature type="active site" evidence="4">
    <location>
        <position position="73"/>
    </location>
</feature>
<feature type="active site" evidence="4">
    <location>
        <position position="119"/>
    </location>
</feature>
<feature type="binding site" evidence="2">
    <location>
        <position position="53"/>
    </location>
    <ligand>
        <name>Ca(2+)</name>
        <dbReference type="ChEBI" id="CHEBI:29108"/>
    </ligand>
</feature>
<feature type="binding site" evidence="2">
    <location>
        <position position="55"/>
    </location>
    <ligand>
        <name>Ca(2+)</name>
        <dbReference type="ChEBI" id="CHEBI:29108"/>
    </ligand>
</feature>
<feature type="binding site" evidence="2">
    <location>
        <position position="57"/>
    </location>
    <ligand>
        <name>Ca(2+)</name>
        <dbReference type="ChEBI" id="CHEBI:29108"/>
    </ligand>
</feature>
<feature type="disulfide bond" description="Interchain (with a B chain)" evidence="2">
    <location>
        <position position="40"/>
    </location>
</feature>
<feature type="disulfide bond" evidence="2">
    <location>
        <begin position="52"/>
        <end position="144"/>
    </location>
</feature>
<feature type="disulfide bond" evidence="2">
    <location>
        <begin position="54"/>
        <end position="70"/>
    </location>
</feature>
<feature type="disulfide bond" evidence="2">
    <location>
        <begin position="76"/>
        <end position="118"/>
    </location>
</feature>
<feature type="disulfide bond" evidence="2">
    <location>
        <begin position="86"/>
        <end position="111"/>
    </location>
</feature>
<feature type="disulfide bond" evidence="2">
    <location>
        <begin position="104"/>
        <end position="116"/>
    </location>
</feature>
<feature type="sequence conflict" description="In Ref. 2; CAB62506." evidence="7" ref="2">
    <original>G</original>
    <variation>L</variation>
    <location>
        <position position="8"/>
    </location>
</feature>
<feature type="sequence conflict" description="In Ref. 2; CAB62506." evidence="7" ref="2">
    <original>C</original>
    <variation>Y</variation>
    <location>
        <position position="69"/>
    </location>
</feature>
<feature type="sequence conflict" description="In Ref. 2; CAB62506." evidence="7" ref="2">
    <original>D</original>
    <variation>G</variation>
    <location>
        <position position="74"/>
    </location>
</feature>
<organism>
    <name type="scientific">Bungarus multicinctus</name>
    <name type="common">Many-banded krait</name>
    <dbReference type="NCBI Taxonomy" id="8616"/>
    <lineage>
        <taxon>Eukaryota</taxon>
        <taxon>Metazoa</taxon>
        <taxon>Chordata</taxon>
        <taxon>Craniata</taxon>
        <taxon>Vertebrata</taxon>
        <taxon>Euteleostomi</taxon>
        <taxon>Lepidosauria</taxon>
        <taxon>Squamata</taxon>
        <taxon>Bifurcata</taxon>
        <taxon>Unidentata</taxon>
        <taxon>Episquamata</taxon>
        <taxon>Toxicofera</taxon>
        <taxon>Serpentes</taxon>
        <taxon>Colubroidea</taxon>
        <taxon>Elapidae</taxon>
        <taxon>Bungarinae</taxon>
        <taxon>Bungarus</taxon>
    </lineage>
</organism>
<accession>Q9PTA1</accession>
<accession>Q8AXW0</accession>
<accession>Q9PRH4</accession>
<accession>Q9PSR3</accession>